<keyword id="KW-0963">Cytoplasm</keyword>
<keyword id="KW-0378">Hydrolase</keyword>
<keyword id="KW-0479">Metal-binding</keyword>
<keyword id="KW-0547">Nucleotide-binding</keyword>
<comment type="function">
    <text evidence="1">Nucleotidase that shows phosphatase activity on nucleoside 5'-monophosphates.</text>
</comment>
<comment type="catalytic activity">
    <reaction evidence="1">
        <text>a ribonucleoside 5'-phosphate + H2O = a ribonucleoside + phosphate</text>
        <dbReference type="Rhea" id="RHEA:12484"/>
        <dbReference type="ChEBI" id="CHEBI:15377"/>
        <dbReference type="ChEBI" id="CHEBI:18254"/>
        <dbReference type="ChEBI" id="CHEBI:43474"/>
        <dbReference type="ChEBI" id="CHEBI:58043"/>
        <dbReference type="EC" id="3.1.3.5"/>
    </reaction>
</comment>
<comment type="cofactor">
    <cofactor evidence="1">
        <name>a divalent metal cation</name>
        <dbReference type="ChEBI" id="CHEBI:60240"/>
    </cofactor>
    <text evidence="1">Binds 1 divalent metal cation per subunit.</text>
</comment>
<comment type="subcellular location">
    <subcellularLocation>
        <location evidence="1">Cytoplasm</location>
    </subcellularLocation>
</comment>
<comment type="similarity">
    <text evidence="1">Belongs to the SurE nucleotidase family.</text>
</comment>
<dbReference type="EC" id="3.1.3.5" evidence="1"/>
<dbReference type="EMBL" id="CP000789">
    <property type="protein sequence ID" value="ABU72456.1"/>
    <property type="molecule type" value="Genomic_DNA"/>
</dbReference>
<dbReference type="RefSeq" id="WP_012128910.1">
    <property type="nucleotide sequence ID" value="NC_009783.1"/>
</dbReference>
<dbReference type="SMR" id="A7MTT7"/>
<dbReference type="KEGG" id="vha:VIBHAR_03520"/>
<dbReference type="PATRIC" id="fig|338187.25.peg.2690"/>
<dbReference type="Proteomes" id="UP000008152">
    <property type="component" value="Chromosome I"/>
</dbReference>
<dbReference type="GO" id="GO:0005737">
    <property type="term" value="C:cytoplasm"/>
    <property type="evidence" value="ECO:0007669"/>
    <property type="project" value="UniProtKB-SubCell"/>
</dbReference>
<dbReference type="GO" id="GO:0008254">
    <property type="term" value="F:3'-nucleotidase activity"/>
    <property type="evidence" value="ECO:0007669"/>
    <property type="project" value="TreeGrafter"/>
</dbReference>
<dbReference type="GO" id="GO:0008253">
    <property type="term" value="F:5'-nucleotidase activity"/>
    <property type="evidence" value="ECO:0007669"/>
    <property type="project" value="UniProtKB-UniRule"/>
</dbReference>
<dbReference type="GO" id="GO:0004309">
    <property type="term" value="F:exopolyphosphatase activity"/>
    <property type="evidence" value="ECO:0007669"/>
    <property type="project" value="TreeGrafter"/>
</dbReference>
<dbReference type="GO" id="GO:0046872">
    <property type="term" value="F:metal ion binding"/>
    <property type="evidence" value="ECO:0007669"/>
    <property type="project" value="UniProtKB-UniRule"/>
</dbReference>
<dbReference type="GO" id="GO:0000166">
    <property type="term" value="F:nucleotide binding"/>
    <property type="evidence" value="ECO:0007669"/>
    <property type="project" value="UniProtKB-KW"/>
</dbReference>
<dbReference type="FunFam" id="3.40.1210.10:FF:000001">
    <property type="entry name" value="5'/3'-nucleotidase SurE"/>
    <property type="match status" value="1"/>
</dbReference>
<dbReference type="Gene3D" id="3.40.1210.10">
    <property type="entry name" value="Survival protein SurE-like phosphatase/nucleotidase"/>
    <property type="match status" value="1"/>
</dbReference>
<dbReference type="HAMAP" id="MF_00060">
    <property type="entry name" value="SurE"/>
    <property type="match status" value="1"/>
</dbReference>
<dbReference type="InterPro" id="IPR030048">
    <property type="entry name" value="SurE"/>
</dbReference>
<dbReference type="InterPro" id="IPR002828">
    <property type="entry name" value="SurE-like_Pase/nucleotidase"/>
</dbReference>
<dbReference type="InterPro" id="IPR036523">
    <property type="entry name" value="SurE-like_sf"/>
</dbReference>
<dbReference type="NCBIfam" id="NF001489">
    <property type="entry name" value="PRK00346.1-3"/>
    <property type="match status" value="1"/>
</dbReference>
<dbReference type="NCBIfam" id="NF001490">
    <property type="entry name" value="PRK00346.1-4"/>
    <property type="match status" value="1"/>
</dbReference>
<dbReference type="NCBIfam" id="TIGR00087">
    <property type="entry name" value="surE"/>
    <property type="match status" value="1"/>
</dbReference>
<dbReference type="PANTHER" id="PTHR30457">
    <property type="entry name" value="5'-NUCLEOTIDASE SURE"/>
    <property type="match status" value="1"/>
</dbReference>
<dbReference type="PANTHER" id="PTHR30457:SF12">
    <property type="entry name" value="5'_3'-NUCLEOTIDASE SURE"/>
    <property type="match status" value="1"/>
</dbReference>
<dbReference type="Pfam" id="PF01975">
    <property type="entry name" value="SurE"/>
    <property type="match status" value="1"/>
</dbReference>
<dbReference type="SUPFAM" id="SSF64167">
    <property type="entry name" value="SurE-like"/>
    <property type="match status" value="1"/>
</dbReference>
<reference key="1">
    <citation type="submission" date="2007-08" db="EMBL/GenBank/DDBJ databases">
        <authorList>
            <consortium name="The Vibrio harveyi Genome Sequencing Project"/>
            <person name="Bassler B."/>
            <person name="Clifton S.W."/>
            <person name="Fulton L."/>
            <person name="Delehaunty K."/>
            <person name="Fronick C."/>
            <person name="Harrison M."/>
            <person name="Markivic C."/>
            <person name="Fulton R."/>
            <person name="Tin-Wollam A.-M."/>
            <person name="Shah N."/>
            <person name="Pepin K."/>
            <person name="Nash W."/>
            <person name="Thiruvilangam P."/>
            <person name="Bhonagiri V."/>
            <person name="Waters C."/>
            <person name="Tu K.C."/>
            <person name="Irgon J."/>
            <person name="Wilson R.K."/>
        </authorList>
    </citation>
    <scope>NUCLEOTIDE SEQUENCE [LARGE SCALE GENOMIC DNA]</scope>
    <source>
        <strain>ATCC BAA-1116 / BB120</strain>
    </source>
</reference>
<protein>
    <recommendedName>
        <fullName evidence="1">5'-nucleotidase SurE</fullName>
        <ecNumber evidence="1">3.1.3.5</ecNumber>
    </recommendedName>
    <alternativeName>
        <fullName evidence="1">Nucleoside 5'-monophosphate phosphohydrolase</fullName>
    </alternativeName>
</protein>
<organism>
    <name type="scientific">Vibrio campbellii (strain ATCC BAA-1116)</name>
    <dbReference type="NCBI Taxonomy" id="2902295"/>
    <lineage>
        <taxon>Bacteria</taxon>
        <taxon>Pseudomonadati</taxon>
        <taxon>Pseudomonadota</taxon>
        <taxon>Gammaproteobacteria</taxon>
        <taxon>Vibrionales</taxon>
        <taxon>Vibrionaceae</taxon>
        <taxon>Vibrio</taxon>
    </lineage>
</organism>
<sequence>MEMDSHNAKPLRILLSNDDGVHAQGIHALADELRSIAEVTIVAPDRNRSGASNSLTLEQPLRVTEIAPKTFSVQGTPTDCVHFALNELMKDDLPDLVLSGINHGANLGDDVLYSGTVAAAMEGHFLGVQAIAFSLVGKQHFESAAKIARQLVEQHLIRPIPTNRLLNVNVPDLPFEELGEIEVTRLGARHHAENMIKQRDPRGHDIYWLGPPGKEQDAGIGTDFYAIEHGFVSITPLQVDLTAHESLRAMDSWLKEEN</sequence>
<name>SURE_VIBC1</name>
<accession>A7MTT7</accession>
<feature type="chain" id="PRO_1000007801" description="5'-nucleotidase SurE">
    <location>
        <begin position="1"/>
        <end position="258"/>
    </location>
</feature>
<feature type="binding site" evidence="1">
    <location>
        <position position="18"/>
    </location>
    <ligand>
        <name>a divalent metal cation</name>
        <dbReference type="ChEBI" id="CHEBI:60240"/>
    </ligand>
</feature>
<feature type="binding site" evidence="1">
    <location>
        <position position="19"/>
    </location>
    <ligand>
        <name>a divalent metal cation</name>
        <dbReference type="ChEBI" id="CHEBI:60240"/>
    </ligand>
</feature>
<feature type="binding site" evidence="1">
    <location>
        <position position="49"/>
    </location>
    <ligand>
        <name>a divalent metal cation</name>
        <dbReference type="ChEBI" id="CHEBI:60240"/>
    </ligand>
</feature>
<feature type="binding site" evidence="1">
    <location>
        <position position="102"/>
    </location>
    <ligand>
        <name>a divalent metal cation</name>
        <dbReference type="ChEBI" id="CHEBI:60240"/>
    </ligand>
</feature>
<gene>
    <name evidence="1" type="primary">surE</name>
    <name type="ordered locus">VIBHAR_03520</name>
</gene>
<evidence type="ECO:0000255" key="1">
    <source>
        <dbReference type="HAMAP-Rule" id="MF_00060"/>
    </source>
</evidence>
<proteinExistence type="inferred from homology"/>